<dbReference type="EC" id="1.1.5.3" evidence="1"/>
<dbReference type="EMBL" id="AM933173">
    <property type="protein sequence ID" value="CAR38144.1"/>
    <property type="molecule type" value="Genomic_DNA"/>
</dbReference>
<dbReference type="RefSeq" id="WP_000667146.1">
    <property type="nucleotide sequence ID" value="NC_011274.1"/>
</dbReference>
<dbReference type="KEGG" id="seg:SG2313"/>
<dbReference type="HOGENOM" id="CLU_047793_0_0_6"/>
<dbReference type="UniPathway" id="UPA00618">
    <property type="reaction ID" value="UER00673"/>
</dbReference>
<dbReference type="Proteomes" id="UP000008321">
    <property type="component" value="Chromosome"/>
</dbReference>
<dbReference type="GO" id="GO:0009331">
    <property type="term" value="C:glycerol-3-phosphate dehydrogenase (FAD) complex"/>
    <property type="evidence" value="ECO:0007669"/>
    <property type="project" value="InterPro"/>
</dbReference>
<dbReference type="GO" id="GO:0004368">
    <property type="term" value="F:glycerol-3-phosphate dehydrogenase (quinone) activity"/>
    <property type="evidence" value="ECO:0007669"/>
    <property type="project" value="UniProtKB-UniRule"/>
</dbReference>
<dbReference type="GO" id="GO:0009061">
    <property type="term" value="P:anaerobic respiration"/>
    <property type="evidence" value="ECO:0007669"/>
    <property type="project" value="TreeGrafter"/>
</dbReference>
<dbReference type="GO" id="GO:0019563">
    <property type="term" value="P:glycerol catabolic process"/>
    <property type="evidence" value="ECO:0007669"/>
    <property type="project" value="UniProtKB-UniRule"/>
</dbReference>
<dbReference type="GO" id="GO:0046168">
    <property type="term" value="P:glycerol-3-phosphate catabolic process"/>
    <property type="evidence" value="ECO:0007669"/>
    <property type="project" value="TreeGrafter"/>
</dbReference>
<dbReference type="FunFam" id="3.50.50.60:FF:000125">
    <property type="entry name" value="Anaerobic glycerol-3-phosphate dehydrogenase subunit B"/>
    <property type="match status" value="1"/>
</dbReference>
<dbReference type="Gene3D" id="3.50.50.60">
    <property type="entry name" value="FAD/NAD(P)-binding domain"/>
    <property type="match status" value="1"/>
</dbReference>
<dbReference type="HAMAP" id="MF_00753">
    <property type="entry name" value="Glycerol3P_GlpB"/>
    <property type="match status" value="1"/>
</dbReference>
<dbReference type="InterPro" id="IPR003953">
    <property type="entry name" value="FAD-dep_OxRdtase_2_FAD-bd"/>
</dbReference>
<dbReference type="InterPro" id="IPR050315">
    <property type="entry name" value="FAD-oxidoreductase_2"/>
</dbReference>
<dbReference type="InterPro" id="IPR036188">
    <property type="entry name" value="FAD/NAD-bd_sf"/>
</dbReference>
<dbReference type="InterPro" id="IPR009158">
    <property type="entry name" value="G3P_DH_GlpB_su"/>
</dbReference>
<dbReference type="NCBIfam" id="TIGR03378">
    <property type="entry name" value="glycerol3P_GlpB"/>
    <property type="match status" value="1"/>
</dbReference>
<dbReference type="NCBIfam" id="NF003718">
    <property type="entry name" value="PRK05329.1-1"/>
    <property type="match status" value="1"/>
</dbReference>
<dbReference type="NCBIfam" id="NF003719">
    <property type="entry name" value="PRK05329.1-2"/>
    <property type="match status" value="1"/>
</dbReference>
<dbReference type="NCBIfam" id="NF003720">
    <property type="entry name" value="PRK05329.1-3"/>
    <property type="match status" value="1"/>
</dbReference>
<dbReference type="PANTHER" id="PTHR43400:SF11">
    <property type="entry name" value="ANAEROBIC GLYCEROL-3-PHOSPHATE DEHYDROGENASE SUBUNIT B"/>
    <property type="match status" value="1"/>
</dbReference>
<dbReference type="PANTHER" id="PTHR43400">
    <property type="entry name" value="FUMARATE REDUCTASE"/>
    <property type="match status" value="1"/>
</dbReference>
<dbReference type="Pfam" id="PF00890">
    <property type="entry name" value="FAD_binding_2"/>
    <property type="match status" value="1"/>
</dbReference>
<dbReference type="PIRSF" id="PIRSF000141">
    <property type="entry name" value="Anaerobic_G3P_dh"/>
    <property type="match status" value="1"/>
</dbReference>
<dbReference type="SUPFAM" id="SSF51905">
    <property type="entry name" value="FAD/NAD(P)-binding domain"/>
    <property type="match status" value="1"/>
</dbReference>
<organism>
    <name type="scientific">Salmonella gallinarum (strain 287/91 / NCTC 13346)</name>
    <dbReference type="NCBI Taxonomy" id="550538"/>
    <lineage>
        <taxon>Bacteria</taxon>
        <taxon>Pseudomonadati</taxon>
        <taxon>Pseudomonadota</taxon>
        <taxon>Gammaproteobacteria</taxon>
        <taxon>Enterobacterales</taxon>
        <taxon>Enterobacteriaceae</taxon>
        <taxon>Salmonella</taxon>
    </lineage>
</organism>
<comment type="function">
    <text evidence="1">Conversion of glycerol 3-phosphate to dihydroxyacetone. Uses fumarate or nitrate as electron acceptor.</text>
</comment>
<comment type="catalytic activity">
    <reaction evidence="1">
        <text>a quinone + sn-glycerol 3-phosphate = dihydroxyacetone phosphate + a quinol</text>
        <dbReference type="Rhea" id="RHEA:18977"/>
        <dbReference type="ChEBI" id="CHEBI:24646"/>
        <dbReference type="ChEBI" id="CHEBI:57597"/>
        <dbReference type="ChEBI" id="CHEBI:57642"/>
        <dbReference type="ChEBI" id="CHEBI:132124"/>
        <dbReference type="EC" id="1.1.5.3"/>
    </reaction>
</comment>
<comment type="cofactor">
    <cofactor evidence="1">
        <name>FMN</name>
        <dbReference type="ChEBI" id="CHEBI:58210"/>
    </cofactor>
</comment>
<comment type="pathway">
    <text evidence="1">Polyol metabolism; glycerol degradation via glycerol kinase pathway; glycerone phosphate from sn-glycerol 3-phosphate (anaerobic route): step 1/1.</text>
</comment>
<comment type="subunit">
    <text evidence="1">Composed of a catalytic GlpA/B dimer and of membrane bound GlpC.</text>
</comment>
<comment type="similarity">
    <text evidence="1">Belongs to the anaerobic G-3-P dehydrogenase subunit B family.</text>
</comment>
<protein>
    <recommendedName>
        <fullName evidence="1">Anaerobic glycerol-3-phosphate dehydrogenase subunit B</fullName>
        <shortName evidence="1">Anaerobic G-3-P dehydrogenase subunit B</shortName>
        <shortName evidence="1">Anaerobic G3Pdhase B</shortName>
        <ecNumber evidence="1">1.1.5.3</ecNumber>
    </recommendedName>
</protein>
<keyword id="KW-0285">Flavoprotein</keyword>
<keyword id="KW-0288">FMN</keyword>
<keyword id="KW-0560">Oxidoreductase</keyword>
<reference key="1">
    <citation type="journal article" date="2008" name="Genome Res.">
        <title>Comparative genome analysis of Salmonella enteritidis PT4 and Salmonella gallinarum 287/91 provides insights into evolutionary and host adaptation pathways.</title>
        <authorList>
            <person name="Thomson N.R."/>
            <person name="Clayton D.J."/>
            <person name="Windhorst D."/>
            <person name="Vernikos G."/>
            <person name="Davidson S."/>
            <person name="Churcher C."/>
            <person name="Quail M.A."/>
            <person name="Stevens M."/>
            <person name="Jones M.A."/>
            <person name="Watson M."/>
            <person name="Barron A."/>
            <person name="Layton A."/>
            <person name="Pickard D."/>
            <person name="Kingsley R.A."/>
            <person name="Bignell A."/>
            <person name="Clark L."/>
            <person name="Harris B."/>
            <person name="Ormond D."/>
            <person name="Abdellah Z."/>
            <person name="Brooks K."/>
            <person name="Cherevach I."/>
            <person name="Chillingworth T."/>
            <person name="Woodward J."/>
            <person name="Norberczak H."/>
            <person name="Lord A."/>
            <person name="Arrowsmith C."/>
            <person name="Jagels K."/>
            <person name="Moule S."/>
            <person name="Mungall K."/>
            <person name="Saunders M."/>
            <person name="Whitehead S."/>
            <person name="Chabalgoity J.A."/>
            <person name="Maskell D."/>
            <person name="Humphreys T."/>
            <person name="Roberts M."/>
            <person name="Barrow P.A."/>
            <person name="Dougan G."/>
            <person name="Parkhill J."/>
        </authorList>
    </citation>
    <scope>NUCLEOTIDE SEQUENCE [LARGE SCALE GENOMIC DNA]</scope>
    <source>
        <strain>287/91 / NCTC 13346</strain>
    </source>
</reference>
<name>GLPB_SALG2</name>
<gene>
    <name evidence="1" type="primary">glpB</name>
    <name type="ordered locus">SG2313</name>
</gene>
<evidence type="ECO:0000255" key="1">
    <source>
        <dbReference type="HAMAP-Rule" id="MF_00753"/>
    </source>
</evidence>
<accession>B5RCB0</accession>
<sequence>MKFDTVIMGGGLAGLLCGLQLQQHGLRCAIVTRGQSALHFSSGSLDLLSALPDGQPVTDITAGLDALCRQAPEHPYSRLGAQKVLTLAQQAQTLLNASGAQLYGDVQQAHQRVTPLGTLRSTWLSSPEVPVWPLSAQRICVVGVSGLLDFQAHLAAASLRQRDLNVETAEIDLPELDVLRDNPTEFRAVNIARLLDNEEKWPLLYDALSPIATNCDMIIMPACFGLANDTLWRWLNERLPCALTLLPTLPPSVLGIRLHNQLQRQFVRQGGIWMPGDEVKKVTCRRGTVSEIWTRNHADIPLRPRFAVLASGSFFSSGLVAEREGIREPILGLDVQQTATRAEWYQQHFFDPQPWQQFGVVTDDAFRPSLAGNTVENLYAIGSVLAGFDPIAEGCGGGVCAVSALQAAHHIAERAGEQQ</sequence>
<proteinExistence type="inferred from homology"/>
<feature type="chain" id="PRO_1000133370" description="Anaerobic glycerol-3-phosphate dehydrogenase subunit B">
    <location>
        <begin position="1"/>
        <end position="419"/>
    </location>
</feature>